<protein>
    <recommendedName>
        <fullName evidence="1">UPF0229 protein CKR_0568</fullName>
    </recommendedName>
</protein>
<organism>
    <name type="scientific">Clostridium kluyveri (strain NBRC 12016)</name>
    <dbReference type="NCBI Taxonomy" id="583346"/>
    <lineage>
        <taxon>Bacteria</taxon>
        <taxon>Bacillati</taxon>
        <taxon>Bacillota</taxon>
        <taxon>Clostridia</taxon>
        <taxon>Eubacteriales</taxon>
        <taxon>Clostridiaceae</taxon>
        <taxon>Clostridium</taxon>
    </lineage>
</organism>
<accession>B9DZE4</accession>
<proteinExistence type="inferred from homology"/>
<gene>
    <name type="ordered locus">CKR_0568</name>
</gene>
<reference key="1">
    <citation type="submission" date="2005-09" db="EMBL/GenBank/DDBJ databases">
        <title>Complete genome sequence of Clostridium kluyveri and comparative genomics of Clostridia species.</title>
        <authorList>
            <person name="Inui M."/>
            <person name="Nonaka H."/>
            <person name="Shinoda Y."/>
            <person name="Ikenaga Y."/>
            <person name="Abe M."/>
            <person name="Naito K."/>
            <person name="Vertes A.A."/>
            <person name="Yukawa H."/>
        </authorList>
    </citation>
    <scope>NUCLEOTIDE SEQUENCE [LARGE SCALE GENOMIC DNA]</scope>
    <source>
        <strain>NBRC 12016</strain>
    </source>
</reference>
<sequence length="403" mass="46486">MAIFREFDVNDHHDRSLEDRRRHRQLVEKSIKDNLADIISEESIIGQSKNKKVKIPIKGIKEYQFIYGDNSSGVGSGDGSQKKGDRIGKAIKDRDGKGNQGAGNQEGEDMYEIEVTIEDVLDYLMEDLELPLMDKKKFSQILSNNSPKKSGYQRKGINPRLAKKRTVVEKLKRQQGTKRALREIHGELESDPKNKLPENTTIKSRFPFKQDDLRYFRVKRKPKLELNAAIICVMDTSGSMDSTRKFLARSFFFVLYRFIKMKYNNVEVKFISHSTSAKVVTENEFFHKVESGGTYISSGLKKALEVIEENYNPAYWNVYTFYVSDGDNWSEDNSLALKCAKDLCKVCNLFSYAEIIPSPYGSSIKHIFQNKITDNNFTVVTIHEKQDLWKSLKKILNKELEER</sequence>
<feature type="chain" id="PRO_1000164978" description="UPF0229 protein CKR_0568">
    <location>
        <begin position="1"/>
        <end position="403"/>
    </location>
</feature>
<feature type="region of interest" description="Disordered" evidence="2">
    <location>
        <begin position="71"/>
        <end position="109"/>
    </location>
</feature>
<feature type="compositionally biased region" description="Basic and acidic residues" evidence="2">
    <location>
        <begin position="80"/>
        <end position="97"/>
    </location>
</feature>
<name>Y568_CLOK1</name>
<evidence type="ECO:0000255" key="1">
    <source>
        <dbReference type="HAMAP-Rule" id="MF_01232"/>
    </source>
</evidence>
<evidence type="ECO:0000256" key="2">
    <source>
        <dbReference type="SAM" id="MobiDB-lite"/>
    </source>
</evidence>
<comment type="similarity">
    <text evidence="1">Belongs to the UPF0229 family.</text>
</comment>
<dbReference type="EMBL" id="AP009049">
    <property type="protein sequence ID" value="BAH05619.1"/>
    <property type="molecule type" value="Genomic_DNA"/>
</dbReference>
<dbReference type="RefSeq" id="WP_011989210.1">
    <property type="nucleotide sequence ID" value="NC_011837.1"/>
</dbReference>
<dbReference type="SMR" id="B9DZE4"/>
<dbReference type="KEGG" id="ckr:CKR_0568"/>
<dbReference type="HOGENOM" id="CLU_049702_2_0_9"/>
<dbReference type="Proteomes" id="UP000007969">
    <property type="component" value="Chromosome"/>
</dbReference>
<dbReference type="CDD" id="cd00198">
    <property type="entry name" value="vWFA"/>
    <property type="match status" value="1"/>
</dbReference>
<dbReference type="Gene3D" id="3.40.50.410">
    <property type="entry name" value="von Willebrand factor, type A domain"/>
    <property type="match status" value="1"/>
</dbReference>
<dbReference type="HAMAP" id="MF_01232">
    <property type="entry name" value="UPF0229"/>
    <property type="match status" value="1"/>
</dbReference>
<dbReference type="InterPro" id="IPR014230">
    <property type="entry name" value="Spore_YhbH"/>
</dbReference>
<dbReference type="InterPro" id="IPR006698">
    <property type="entry name" value="UPF0229"/>
</dbReference>
<dbReference type="InterPro" id="IPR036465">
    <property type="entry name" value="vWFA_dom_sf"/>
</dbReference>
<dbReference type="NCBIfam" id="TIGR02877">
    <property type="entry name" value="spore_yhbH"/>
    <property type="match status" value="1"/>
</dbReference>
<dbReference type="PANTHER" id="PTHR30510">
    <property type="entry name" value="UPF0229 PROTEIN YEAH"/>
    <property type="match status" value="1"/>
</dbReference>
<dbReference type="PANTHER" id="PTHR30510:SF2">
    <property type="entry name" value="UPF0229 PROTEIN YEAH"/>
    <property type="match status" value="1"/>
</dbReference>
<dbReference type="Pfam" id="PF04285">
    <property type="entry name" value="DUF444"/>
    <property type="match status" value="1"/>
</dbReference>
<dbReference type="SUPFAM" id="SSF53300">
    <property type="entry name" value="vWA-like"/>
    <property type="match status" value="1"/>
</dbReference>